<organism>
    <name type="scientific">Helicobacter pylori (strain J99 / ATCC 700824)</name>
    <name type="common">Campylobacter pylori J99</name>
    <dbReference type="NCBI Taxonomy" id="85963"/>
    <lineage>
        <taxon>Bacteria</taxon>
        <taxon>Pseudomonadati</taxon>
        <taxon>Campylobacterota</taxon>
        <taxon>Epsilonproteobacteria</taxon>
        <taxon>Campylobacterales</taxon>
        <taxon>Helicobacteraceae</taxon>
        <taxon>Helicobacter</taxon>
    </lineage>
</organism>
<evidence type="ECO:0000250" key="1"/>
<evidence type="ECO:0000305" key="2"/>
<keyword id="KW-0032">Aminotransferase</keyword>
<keyword id="KW-0663">Pyridoxal phosphate</keyword>
<keyword id="KW-0808">Transferase</keyword>
<accession>Q9ZLA7</accession>
<gene>
    <name type="ordered locus">jhp_0673</name>
</gene>
<sequence>MLLFTPGPVAINEEMRSSFSQPMPHHRTKDFEKIFQSVRENLKKMTGLEEVLLLSSSGTGAMEASVISLCQKELLFVNAGKFGERFGKIAKAHSIKAHELVYEWDTPAQVDGILNALKANPNIDAFCIQACESSGGLRHPVEKIAQAIKETNPNVFVIVDAITALGVEPLEITHVDALIGGSQKAFMLPPAMSLIALSQKAIDRIEERNVGFYFNLKSELKNQKNNTTSYTAPILHTLGLQRYFELVQNLGGFEALYQETKRVALASQKAVLALGLKIFPKSPSLSMTTIVSEHAKELKNLLKEKYQVQFAGGQEPYKDTLIRINHMGIIPVYKSAYALNALELALNDLDLREFDGMANTTFLKQYYEI</sequence>
<proteinExistence type="inferred from homology"/>
<feature type="chain" id="PRO_0000150342" description="Uncharacterized aminotransferase jhp_0673">
    <location>
        <begin position="1"/>
        <end position="369"/>
    </location>
</feature>
<feature type="modified residue" description="N6-(pyridoxal phosphate)lysine" evidence="1">
    <location>
        <position position="184"/>
    </location>
</feature>
<comment type="cofactor">
    <cofactor evidence="1">
        <name>pyridoxal 5'-phosphate</name>
        <dbReference type="ChEBI" id="CHEBI:597326"/>
    </cofactor>
</comment>
<comment type="similarity">
    <text evidence="2">Belongs to the class-V pyridoxal-phosphate-dependent aminotransferase family.</text>
</comment>
<name>Y736_HELPJ</name>
<protein>
    <recommendedName>
        <fullName>Uncharacterized aminotransferase jhp_0673</fullName>
        <ecNumber>2.6.1.-</ecNumber>
    </recommendedName>
</protein>
<reference key="1">
    <citation type="journal article" date="1999" name="Nature">
        <title>Genomic sequence comparison of two unrelated isolates of the human gastric pathogen Helicobacter pylori.</title>
        <authorList>
            <person name="Alm R.A."/>
            <person name="Ling L.-S.L."/>
            <person name="Moir D.T."/>
            <person name="King B.L."/>
            <person name="Brown E.D."/>
            <person name="Doig P.C."/>
            <person name="Smith D.R."/>
            <person name="Noonan B."/>
            <person name="Guild B.C."/>
            <person name="deJonge B.L."/>
            <person name="Carmel G."/>
            <person name="Tummino P.J."/>
            <person name="Caruso A."/>
            <person name="Uria-Nickelsen M."/>
            <person name="Mills D.M."/>
            <person name="Ives C."/>
            <person name="Gibson R."/>
            <person name="Merberg D."/>
            <person name="Mills S.D."/>
            <person name="Jiang Q."/>
            <person name="Taylor D.E."/>
            <person name="Vovis G.F."/>
            <person name="Trust T.J."/>
        </authorList>
    </citation>
    <scope>NUCLEOTIDE SEQUENCE [LARGE SCALE GENOMIC DNA]</scope>
    <source>
        <strain>J99 / ATCC 700824</strain>
    </source>
</reference>
<dbReference type="EC" id="2.6.1.-"/>
<dbReference type="EMBL" id="AE001439">
    <property type="protein sequence ID" value="AAD06257.1"/>
    <property type="molecule type" value="Genomic_DNA"/>
</dbReference>
<dbReference type="PIR" id="G71902">
    <property type="entry name" value="G71902"/>
</dbReference>
<dbReference type="RefSeq" id="WP_000924045.1">
    <property type="nucleotide sequence ID" value="NC_000921.1"/>
</dbReference>
<dbReference type="SMR" id="Q9ZLA7"/>
<dbReference type="KEGG" id="hpj:jhp_0673"/>
<dbReference type="PATRIC" id="fig|85963.30.peg.307"/>
<dbReference type="eggNOG" id="COG0075">
    <property type="taxonomic scope" value="Bacteria"/>
</dbReference>
<dbReference type="Proteomes" id="UP000000804">
    <property type="component" value="Chromosome"/>
</dbReference>
<dbReference type="GO" id="GO:0008483">
    <property type="term" value="F:transaminase activity"/>
    <property type="evidence" value="ECO:0007669"/>
    <property type="project" value="UniProtKB-KW"/>
</dbReference>
<dbReference type="Gene3D" id="3.90.1150.10">
    <property type="entry name" value="Aspartate Aminotransferase, domain 1"/>
    <property type="match status" value="1"/>
</dbReference>
<dbReference type="Gene3D" id="3.40.640.10">
    <property type="entry name" value="Type I PLP-dependent aspartate aminotransferase-like (Major domain)"/>
    <property type="match status" value="1"/>
</dbReference>
<dbReference type="InterPro" id="IPR000192">
    <property type="entry name" value="Aminotrans_V_dom"/>
</dbReference>
<dbReference type="InterPro" id="IPR015424">
    <property type="entry name" value="PyrdxlP-dep_Trfase"/>
</dbReference>
<dbReference type="InterPro" id="IPR015421">
    <property type="entry name" value="PyrdxlP-dep_Trfase_major"/>
</dbReference>
<dbReference type="InterPro" id="IPR015422">
    <property type="entry name" value="PyrdxlP-dep_Trfase_small"/>
</dbReference>
<dbReference type="InterPro" id="IPR024169">
    <property type="entry name" value="SP_NH2Trfase/AEP_transaminase"/>
</dbReference>
<dbReference type="PANTHER" id="PTHR42778">
    <property type="entry name" value="2-AMINOETHYLPHOSPHONATE--PYRUVATE TRANSAMINASE"/>
    <property type="match status" value="1"/>
</dbReference>
<dbReference type="PANTHER" id="PTHR42778:SF1">
    <property type="entry name" value="2-AMINOETHYLPHOSPHONATE--PYRUVATE TRANSAMINASE"/>
    <property type="match status" value="1"/>
</dbReference>
<dbReference type="Pfam" id="PF00266">
    <property type="entry name" value="Aminotran_5"/>
    <property type="match status" value="1"/>
</dbReference>
<dbReference type="PIRSF" id="PIRSF000524">
    <property type="entry name" value="SPT"/>
    <property type="match status" value="1"/>
</dbReference>
<dbReference type="SUPFAM" id="SSF53383">
    <property type="entry name" value="PLP-dependent transferases"/>
    <property type="match status" value="1"/>
</dbReference>